<sequence length="154" mass="17214">MGLSDGEWQLVLNVWGKVEADIPSHGQEVLIRLFKGHPETLEKFDKFKHLKSEDEMKASEDLKKHGATVLTALGGILKKKGHHEAEIKPLAQSHATKHKIPVKYLEFISECIIQVLQSKHPGDFGADAQGAMNKALELFRKDMASNYKELGFQG</sequence>
<protein>
    <recommendedName>
        <fullName>Myoglobin</fullName>
    </recommendedName>
    <alternativeName>
        <fullName evidence="1">Nitrite reductase MB</fullName>
        <ecNumber evidence="1">1.7.-.-</ecNumber>
    </alternativeName>
    <alternativeName>
        <fullName evidence="1">Pseudoperoxidase MB</fullName>
        <ecNumber evidence="1">1.11.1.-</ecNumber>
    </alternativeName>
</protein>
<keyword id="KW-0963">Cytoplasm</keyword>
<keyword id="KW-0903">Direct protein sequencing</keyword>
<keyword id="KW-0349">Heme</keyword>
<keyword id="KW-0408">Iron</keyword>
<keyword id="KW-0479">Metal-binding</keyword>
<keyword id="KW-0514">Muscle protein</keyword>
<keyword id="KW-0560">Oxidoreductase</keyword>
<keyword id="KW-0561">Oxygen transport</keyword>
<keyword id="KW-0597">Phosphoprotein</keyword>
<keyword id="KW-0813">Transport</keyword>
<reference key="1">
    <citation type="journal article" date="1971" name="Biochim. Biophys. Acta">
        <title>The myoglobin of primates. I. Hylobates agilis (gibbon).</title>
        <authorList>
            <person name="Romero-Herrera A.E."/>
            <person name="Lehmann H."/>
        </authorList>
    </citation>
    <scope>PROTEIN SEQUENCE OF 2-154</scope>
    <source>
        <tissue>Skeletal muscle</tissue>
    </source>
</reference>
<feature type="initiator methionine" description="Removed" evidence="8">
    <location>
        <position position="1"/>
    </location>
</feature>
<feature type="chain" id="PRO_0000053304" description="Myoglobin">
    <location>
        <begin position="2"/>
        <end position="154"/>
    </location>
</feature>
<feature type="domain" description="Globin" evidence="7">
    <location>
        <begin position="2"/>
        <end position="148"/>
    </location>
</feature>
<feature type="binding site" evidence="5">
    <location>
        <position position="65"/>
    </location>
    <ligand>
        <name>nitrite</name>
        <dbReference type="ChEBI" id="CHEBI:16301"/>
    </ligand>
</feature>
<feature type="binding site" evidence="3 7">
    <location>
        <position position="65"/>
    </location>
    <ligand>
        <name>O2</name>
        <dbReference type="ChEBI" id="CHEBI:15379"/>
    </ligand>
</feature>
<feature type="binding site" description="proximal binding residue" evidence="1">
    <location>
        <position position="94"/>
    </location>
    <ligand>
        <name>heme b</name>
        <dbReference type="ChEBI" id="CHEBI:60344"/>
    </ligand>
    <ligandPart>
        <name>Fe</name>
        <dbReference type="ChEBI" id="CHEBI:18248"/>
    </ligandPart>
</feature>
<feature type="modified residue" description="Phosphoserine" evidence="6">
    <location>
        <position position="4"/>
    </location>
</feature>
<feature type="modified residue" description="Phosphothreonine" evidence="4">
    <location>
        <position position="68"/>
    </location>
</feature>
<dbReference type="EC" id="1.7.-.-" evidence="1"/>
<dbReference type="EC" id="1.11.1.-" evidence="1"/>
<dbReference type="PIR" id="A02466">
    <property type="entry name" value="MYGI"/>
</dbReference>
<dbReference type="SMR" id="P62734"/>
<dbReference type="GO" id="GO:0070062">
    <property type="term" value="C:extracellular exosome"/>
    <property type="evidence" value="ECO:0007669"/>
    <property type="project" value="TreeGrafter"/>
</dbReference>
<dbReference type="GO" id="GO:0016528">
    <property type="term" value="C:sarcoplasm"/>
    <property type="evidence" value="ECO:0000250"/>
    <property type="project" value="UniProtKB"/>
</dbReference>
<dbReference type="GO" id="GO:0020037">
    <property type="term" value="F:heme binding"/>
    <property type="evidence" value="ECO:0007669"/>
    <property type="project" value="InterPro"/>
</dbReference>
<dbReference type="GO" id="GO:0046872">
    <property type="term" value="F:metal ion binding"/>
    <property type="evidence" value="ECO:0007669"/>
    <property type="project" value="UniProtKB-KW"/>
</dbReference>
<dbReference type="GO" id="GO:0098809">
    <property type="term" value="F:nitrite reductase activity"/>
    <property type="evidence" value="ECO:0000250"/>
    <property type="project" value="UniProtKB"/>
</dbReference>
<dbReference type="GO" id="GO:0019825">
    <property type="term" value="F:oxygen binding"/>
    <property type="evidence" value="ECO:0007669"/>
    <property type="project" value="InterPro"/>
</dbReference>
<dbReference type="GO" id="GO:0005344">
    <property type="term" value="F:oxygen carrier activity"/>
    <property type="evidence" value="ECO:0000250"/>
    <property type="project" value="UniProtKB"/>
</dbReference>
<dbReference type="GO" id="GO:0004601">
    <property type="term" value="F:peroxidase activity"/>
    <property type="evidence" value="ECO:0000250"/>
    <property type="project" value="UniProtKB"/>
</dbReference>
<dbReference type="GO" id="GO:0019430">
    <property type="term" value="P:removal of superoxide radicals"/>
    <property type="evidence" value="ECO:0000250"/>
    <property type="project" value="UniProtKB"/>
</dbReference>
<dbReference type="CDD" id="cd08926">
    <property type="entry name" value="Mb"/>
    <property type="match status" value="1"/>
</dbReference>
<dbReference type="Gene3D" id="6.10.140.2100">
    <property type="match status" value="1"/>
</dbReference>
<dbReference type="Gene3D" id="6.10.140.2110">
    <property type="match status" value="1"/>
</dbReference>
<dbReference type="InterPro" id="IPR000971">
    <property type="entry name" value="Globin"/>
</dbReference>
<dbReference type="InterPro" id="IPR009050">
    <property type="entry name" value="Globin-like_sf"/>
</dbReference>
<dbReference type="InterPro" id="IPR002335">
    <property type="entry name" value="Myoglobin"/>
</dbReference>
<dbReference type="PANTHER" id="PTHR47132">
    <property type="entry name" value="MYOGLOBIN"/>
    <property type="match status" value="1"/>
</dbReference>
<dbReference type="PANTHER" id="PTHR47132:SF1">
    <property type="entry name" value="MYOGLOBIN"/>
    <property type="match status" value="1"/>
</dbReference>
<dbReference type="Pfam" id="PF00042">
    <property type="entry name" value="Globin"/>
    <property type="match status" value="1"/>
</dbReference>
<dbReference type="PRINTS" id="PR00613">
    <property type="entry name" value="MYOGLOBIN"/>
</dbReference>
<dbReference type="SUPFAM" id="SSF46458">
    <property type="entry name" value="Globin-like"/>
    <property type="match status" value="1"/>
</dbReference>
<dbReference type="PROSITE" id="PS01033">
    <property type="entry name" value="GLOBIN"/>
    <property type="match status" value="1"/>
</dbReference>
<accession>P62734</accession>
<accession>P02146</accession>
<comment type="function">
    <text evidence="1">Monomeric heme protein which primary function is to store oxygen and facilitate its diffusion within muscle tissues. Reversibly binds oxygen through a pentacoordinated heme iron and enables its timely and efficient release as needed during periods of heightened demand. Depending on the oxidative conditions of tissues and cells, and in addition to its ability to bind oxygen, it also has a nitrite reductase activity whereby it regulates the production of bioactive nitric oxide. Under stress conditions, like hypoxia and anoxia, it also protects cells against reactive oxygen species thanks to its pseudoperoxidase activity.</text>
</comment>
<comment type="catalytic activity">
    <reaction evidence="1">
        <text>Fe(III)-heme b-[protein] + nitric oxide + H2O = Fe(II)-heme b-[protein] + nitrite + 2 H(+)</text>
        <dbReference type="Rhea" id="RHEA:77711"/>
        <dbReference type="Rhea" id="RHEA-COMP:18975"/>
        <dbReference type="Rhea" id="RHEA-COMP:18976"/>
        <dbReference type="ChEBI" id="CHEBI:15377"/>
        <dbReference type="ChEBI" id="CHEBI:15378"/>
        <dbReference type="ChEBI" id="CHEBI:16301"/>
        <dbReference type="ChEBI" id="CHEBI:16480"/>
        <dbReference type="ChEBI" id="CHEBI:55376"/>
        <dbReference type="ChEBI" id="CHEBI:60344"/>
    </reaction>
    <physiologicalReaction direction="right-to-left" evidence="1">
        <dbReference type="Rhea" id="RHEA:77713"/>
    </physiologicalReaction>
</comment>
<comment type="catalytic activity">
    <reaction evidence="1">
        <text>H2O2 + AH2 = A + 2 H2O</text>
        <dbReference type="Rhea" id="RHEA:30275"/>
        <dbReference type="ChEBI" id="CHEBI:13193"/>
        <dbReference type="ChEBI" id="CHEBI:15377"/>
        <dbReference type="ChEBI" id="CHEBI:16240"/>
        <dbReference type="ChEBI" id="CHEBI:17499"/>
    </reaction>
</comment>
<comment type="subunit">
    <text evidence="2">Monomeric.</text>
</comment>
<comment type="subcellular location">
    <subcellularLocation>
        <location evidence="1">Cytoplasm</location>
        <location evidence="1">Sarcoplasm</location>
    </subcellularLocation>
</comment>
<comment type="similarity">
    <text evidence="7">Belongs to the globin family.</text>
</comment>
<organism>
    <name type="scientific">Hylobates agilis</name>
    <name type="common">Agile gibbon</name>
    <dbReference type="NCBI Taxonomy" id="9579"/>
    <lineage>
        <taxon>Eukaryota</taxon>
        <taxon>Metazoa</taxon>
        <taxon>Chordata</taxon>
        <taxon>Craniata</taxon>
        <taxon>Vertebrata</taxon>
        <taxon>Euteleostomi</taxon>
        <taxon>Mammalia</taxon>
        <taxon>Eutheria</taxon>
        <taxon>Euarchontoglires</taxon>
        <taxon>Primates</taxon>
        <taxon>Haplorrhini</taxon>
        <taxon>Catarrhini</taxon>
        <taxon>Hylobatidae</taxon>
        <taxon>Hylobates</taxon>
    </lineage>
</organism>
<proteinExistence type="evidence at protein level"/>
<name>MYG_HYLAG</name>
<gene>
    <name type="primary">MB</name>
</gene>
<evidence type="ECO:0000250" key="1">
    <source>
        <dbReference type="UniProtKB" id="P02144"/>
    </source>
</evidence>
<evidence type="ECO:0000250" key="2">
    <source>
        <dbReference type="UniProtKB" id="P02185"/>
    </source>
</evidence>
<evidence type="ECO:0000250" key="3">
    <source>
        <dbReference type="UniProtKB" id="P02189"/>
    </source>
</evidence>
<evidence type="ECO:0000250" key="4">
    <source>
        <dbReference type="UniProtKB" id="P04247"/>
    </source>
</evidence>
<evidence type="ECO:0000250" key="5">
    <source>
        <dbReference type="UniProtKB" id="P68082"/>
    </source>
</evidence>
<evidence type="ECO:0000250" key="6">
    <source>
        <dbReference type="UniProtKB" id="Q9QZ76"/>
    </source>
</evidence>
<evidence type="ECO:0000255" key="7">
    <source>
        <dbReference type="PROSITE-ProRule" id="PRU00238"/>
    </source>
</evidence>
<evidence type="ECO:0000269" key="8">
    <source>
    </source>
</evidence>